<proteinExistence type="inferred from homology"/>
<evidence type="ECO:0000255" key="1">
    <source>
        <dbReference type="HAMAP-Rule" id="MF_00244"/>
    </source>
</evidence>
<sequence length="204" mass="23739">MKRFGIIGGTFDPIHNAHLYIAYEAKEKLSLDEVIFMPAGIQPLKANNIITDPGLRYSMVKAAIEHFSEFSVSDYEIEKGGLSFTHETLEYFKNKISDRDKDNELFFITGADCLFSMEKWKEVKKIFSLATLVVFSRGGINKSDMINRKHMIEEKYNGKIIVLDLKELEISSTDIRNRVHENKRIDFFVPERVSDIIYKNRLYR</sequence>
<accession>A6LQS1</accession>
<comment type="function">
    <text evidence="1">Catalyzes the reversible adenylation of nicotinate mononucleotide (NaMN) to nicotinic acid adenine dinucleotide (NaAD).</text>
</comment>
<comment type="catalytic activity">
    <reaction evidence="1">
        <text>nicotinate beta-D-ribonucleotide + ATP + H(+) = deamido-NAD(+) + diphosphate</text>
        <dbReference type="Rhea" id="RHEA:22860"/>
        <dbReference type="ChEBI" id="CHEBI:15378"/>
        <dbReference type="ChEBI" id="CHEBI:30616"/>
        <dbReference type="ChEBI" id="CHEBI:33019"/>
        <dbReference type="ChEBI" id="CHEBI:57502"/>
        <dbReference type="ChEBI" id="CHEBI:58437"/>
        <dbReference type="EC" id="2.7.7.18"/>
    </reaction>
</comment>
<comment type="pathway">
    <text evidence="1">Cofactor biosynthesis; NAD(+) biosynthesis; deamido-NAD(+) from nicotinate D-ribonucleotide: step 1/1.</text>
</comment>
<comment type="similarity">
    <text evidence="1">Belongs to the NadD family.</text>
</comment>
<feature type="chain" id="PRO_1000078374" description="Probable nicotinate-nucleotide adenylyltransferase">
    <location>
        <begin position="1"/>
        <end position="204"/>
    </location>
</feature>
<name>NADD_CLOB8</name>
<protein>
    <recommendedName>
        <fullName evidence="1">Probable nicotinate-nucleotide adenylyltransferase</fullName>
        <ecNumber evidence="1">2.7.7.18</ecNumber>
    </recommendedName>
    <alternativeName>
        <fullName evidence="1">Deamido-NAD(+) diphosphorylase</fullName>
    </alternativeName>
    <alternativeName>
        <fullName evidence="1">Deamido-NAD(+) pyrophosphorylase</fullName>
    </alternativeName>
    <alternativeName>
        <fullName evidence="1">Nicotinate mononucleotide adenylyltransferase</fullName>
        <shortName evidence="1">NaMN adenylyltransferase</shortName>
    </alternativeName>
</protein>
<keyword id="KW-0067">ATP-binding</keyword>
<keyword id="KW-0520">NAD</keyword>
<keyword id="KW-0547">Nucleotide-binding</keyword>
<keyword id="KW-0548">Nucleotidyltransferase</keyword>
<keyword id="KW-0662">Pyridine nucleotide biosynthesis</keyword>
<keyword id="KW-0808">Transferase</keyword>
<dbReference type="EC" id="2.7.7.18" evidence="1"/>
<dbReference type="EMBL" id="CP000721">
    <property type="protein sequence ID" value="ABR32701.1"/>
    <property type="molecule type" value="Genomic_DNA"/>
</dbReference>
<dbReference type="RefSeq" id="WP_011967862.1">
    <property type="nucleotide sequence ID" value="NC_009617.1"/>
</dbReference>
<dbReference type="SMR" id="A6LQS1"/>
<dbReference type="GeneID" id="66343428"/>
<dbReference type="KEGG" id="cbe:Cbei_0513"/>
<dbReference type="eggNOG" id="COG1057">
    <property type="taxonomic scope" value="Bacteria"/>
</dbReference>
<dbReference type="HOGENOM" id="CLU_069765_0_1_9"/>
<dbReference type="UniPathway" id="UPA00253">
    <property type="reaction ID" value="UER00332"/>
</dbReference>
<dbReference type="Proteomes" id="UP000000565">
    <property type="component" value="Chromosome"/>
</dbReference>
<dbReference type="GO" id="GO:0005524">
    <property type="term" value="F:ATP binding"/>
    <property type="evidence" value="ECO:0007669"/>
    <property type="project" value="UniProtKB-KW"/>
</dbReference>
<dbReference type="GO" id="GO:0004515">
    <property type="term" value="F:nicotinate-nucleotide adenylyltransferase activity"/>
    <property type="evidence" value="ECO:0007669"/>
    <property type="project" value="UniProtKB-UniRule"/>
</dbReference>
<dbReference type="GO" id="GO:0009435">
    <property type="term" value="P:NAD biosynthetic process"/>
    <property type="evidence" value="ECO:0007669"/>
    <property type="project" value="UniProtKB-UniRule"/>
</dbReference>
<dbReference type="CDD" id="cd02165">
    <property type="entry name" value="NMNAT"/>
    <property type="match status" value="1"/>
</dbReference>
<dbReference type="Gene3D" id="3.40.50.620">
    <property type="entry name" value="HUPs"/>
    <property type="match status" value="1"/>
</dbReference>
<dbReference type="HAMAP" id="MF_00244">
    <property type="entry name" value="NaMN_adenylyltr"/>
    <property type="match status" value="1"/>
</dbReference>
<dbReference type="InterPro" id="IPR004821">
    <property type="entry name" value="Cyt_trans-like"/>
</dbReference>
<dbReference type="InterPro" id="IPR005248">
    <property type="entry name" value="NadD/NMNAT"/>
</dbReference>
<dbReference type="InterPro" id="IPR014729">
    <property type="entry name" value="Rossmann-like_a/b/a_fold"/>
</dbReference>
<dbReference type="NCBIfam" id="TIGR00125">
    <property type="entry name" value="cyt_tran_rel"/>
    <property type="match status" value="1"/>
</dbReference>
<dbReference type="NCBIfam" id="TIGR00482">
    <property type="entry name" value="nicotinate (nicotinamide) nucleotide adenylyltransferase"/>
    <property type="match status" value="1"/>
</dbReference>
<dbReference type="NCBIfam" id="NF000840">
    <property type="entry name" value="PRK00071.1-3"/>
    <property type="match status" value="1"/>
</dbReference>
<dbReference type="PANTHER" id="PTHR39321">
    <property type="entry name" value="NICOTINATE-NUCLEOTIDE ADENYLYLTRANSFERASE-RELATED"/>
    <property type="match status" value="1"/>
</dbReference>
<dbReference type="PANTHER" id="PTHR39321:SF3">
    <property type="entry name" value="PHOSPHOPANTETHEINE ADENYLYLTRANSFERASE"/>
    <property type="match status" value="1"/>
</dbReference>
<dbReference type="Pfam" id="PF01467">
    <property type="entry name" value="CTP_transf_like"/>
    <property type="match status" value="1"/>
</dbReference>
<dbReference type="SUPFAM" id="SSF52374">
    <property type="entry name" value="Nucleotidylyl transferase"/>
    <property type="match status" value="1"/>
</dbReference>
<gene>
    <name evidence="1" type="primary">nadD</name>
    <name type="ordered locus">Cbei_0513</name>
</gene>
<reference key="1">
    <citation type="submission" date="2007-06" db="EMBL/GenBank/DDBJ databases">
        <title>Complete sequence of Clostridium beijerinckii NCIMB 8052.</title>
        <authorList>
            <consortium name="US DOE Joint Genome Institute"/>
            <person name="Copeland A."/>
            <person name="Lucas S."/>
            <person name="Lapidus A."/>
            <person name="Barry K."/>
            <person name="Detter J.C."/>
            <person name="Glavina del Rio T."/>
            <person name="Hammon N."/>
            <person name="Israni S."/>
            <person name="Dalin E."/>
            <person name="Tice H."/>
            <person name="Pitluck S."/>
            <person name="Sims D."/>
            <person name="Brettin T."/>
            <person name="Bruce D."/>
            <person name="Tapia R."/>
            <person name="Brainard J."/>
            <person name="Schmutz J."/>
            <person name="Larimer F."/>
            <person name="Land M."/>
            <person name="Hauser L."/>
            <person name="Kyrpides N."/>
            <person name="Mikhailova N."/>
            <person name="Bennet G."/>
            <person name="Cann I."/>
            <person name="Chen J.-S."/>
            <person name="Contreras A.L."/>
            <person name="Jones D."/>
            <person name="Kashket E."/>
            <person name="Mitchell W."/>
            <person name="Stoddard S."/>
            <person name="Schwarz W."/>
            <person name="Qureshi N."/>
            <person name="Young M."/>
            <person name="Shi Z."/>
            <person name="Ezeji T."/>
            <person name="White B."/>
            <person name="Blaschek H."/>
            <person name="Richardson P."/>
        </authorList>
    </citation>
    <scope>NUCLEOTIDE SEQUENCE [LARGE SCALE GENOMIC DNA]</scope>
    <source>
        <strain>ATCC 51743 / NCIMB 8052</strain>
    </source>
</reference>
<organism>
    <name type="scientific">Clostridium beijerinckii (strain ATCC 51743 / NCIMB 8052)</name>
    <name type="common">Clostridium acetobutylicum</name>
    <dbReference type="NCBI Taxonomy" id="290402"/>
    <lineage>
        <taxon>Bacteria</taxon>
        <taxon>Bacillati</taxon>
        <taxon>Bacillota</taxon>
        <taxon>Clostridia</taxon>
        <taxon>Eubacteriales</taxon>
        <taxon>Clostridiaceae</taxon>
        <taxon>Clostridium</taxon>
    </lineage>
</organism>